<gene>
    <name evidence="1" type="primary">sotB</name>
    <name type="ordered locus">ECP_1511</name>
</gene>
<feature type="chain" id="PRO_0000259249" description="Probable sugar efflux transporter">
    <location>
        <begin position="1"/>
        <end position="396"/>
    </location>
</feature>
<feature type="transmembrane region" description="Helical" evidence="1">
    <location>
        <begin position="15"/>
        <end position="35"/>
    </location>
</feature>
<feature type="transmembrane region" description="Helical" evidence="1">
    <location>
        <begin position="50"/>
        <end position="70"/>
    </location>
</feature>
<feature type="transmembrane region" description="Helical" evidence="1">
    <location>
        <begin position="81"/>
        <end position="101"/>
    </location>
</feature>
<feature type="transmembrane region" description="Helical" evidence="1">
    <location>
        <begin position="103"/>
        <end position="123"/>
    </location>
</feature>
<feature type="transmembrane region" description="Helical" evidence="1">
    <location>
        <begin position="136"/>
        <end position="156"/>
    </location>
</feature>
<feature type="transmembrane region" description="Helical" evidence="1">
    <location>
        <begin position="170"/>
        <end position="190"/>
    </location>
</feature>
<feature type="transmembrane region" description="Helical" evidence="1">
    <location>
        <begin position="209"/>
        <end position="229"/>
    </location>
</feature>
<feature type="transmembrane region" description="Helical" evidence="1">
    <location>
        <begin position="246"/>
        <end position="266"/>
    </location>
</feature>
<feature type="transmembrane region" description="Helical" evidence="1">
    <location>
        <begin position="275"/>
        <end position="295"/>
    </location>
</feature>
<feature type="transmembrane region" description="Helical" evidence="1">
    <location>
        <begin position="299"/>
        <end position="319"/>
    </location>
</feature>
<feature type="transmembrane region" description="Helical" evidence="1">
    <location>
        <begin position="333"/>
        <end position="353"/>
    </location>
</feature>
<feature type="transmembrane region" description="Helical" evidence="1">
    <location>
        <begin position="364"/>
        <end position="384"/>
    </location>
</feature>
<dbReference type="EMBL" id="CP000247">
    <property type="protein sequence ID" value="ABG69518.1"/>
    <property type="molecule type" value="Genomic_DNA"/>
</dbReference>
<dbReference type="SMR" id="Q0THR1"/>
<dbReference type="KEGG" id="ecp:ECP_1511"/>
<dbReference type="HOGENOM" id="CLU_001265_61_1_6"/>
<dbReference type="Proteomes" id="UP000009182">
    <property type="component" value="Chromosome"/>
</dbReference>
<dbReference type="GO" id="GO:0005886">
    <property type="term" value="C:plasma membrane"/>
    <property type="evidence" value="ECO:0007669"/>
    <property type="project" value="UniProtKB-SubCell"/>
</dbReference>
<dbReference type="GO" id="GO:0015144">
    <property type="term" value="F:carbohydrate transmembrane transporter activity"/>
    <property type="evidence" value="ECO:0007669"/>
    <property type="project" value="UniProtKB-UniRule"/>
</dbReference>
<dbReference type="CDD" id="cd17324">
    <property type="entry name" value="MFS_NepI_like"/>
    <property type="match status" value="1"/>
</dbReference>
<dbReference type="FunFam" id="1.20.1250.20:FF:000079">
    <property type="entry name" value="Probable sugar efflux transporter"/>
    <property type="match status" value="1"/>
</dbReference>
<dbReference type="Gene3D" id="1.20.1250.20">
    <property type="entry name" value="MFS general substrate transporter like domains"/>
    <property type="match status" value="1"/>
</dbReference>
<dbReference type="HAMAP" id="MF_00517">
    <property type="entry name" value="MFS_SotB"/>
    <property type="match status" value="1"/>
</dbReference>
<dbReference type="InterPro" id="IPR011701">
    <property type="entry name" value="MFS"/>
</dbReference>
<dbReference type="InterPro" id="IPR020846">
    <property type="entry name" value="MFS_dom"/>
</dbReference>
<dbReference type="InterPro" id="IPR050189">
    <property type="entry name" value="MFS_Efflux_Transporters"/>
</dbReference>
<dbReference type="InterPro" id="IPR036259">
    <property type="entry name" value="MFS_trans_sf"/>
</dbReference>
<dbReference type="InterPro" id="IPR023495">
    <property type="entry name" value="Sugar_effux_transptr_put"/>
</dbReference>
<dbReference type="NCBIfam" id="NF002921">
    <property type="entry name" value="PRK03545.1"/>
    <property type="match status" value="1"/>
</dbReference>
<dbReference type="PANTHER" id="PTHR43124">
    <property type="entry name" value="PURINE EFFLUX PUMP PBUE"/>
    <property type="match status" value="1"/>
</dbReference>
<dbReference type="PANTHER" id="PTHR43124:SF4">
    <property type="entry name" value="SUGAR EFFLUX TRANSPORTER"/>
    <property type="match status" value="1"/>
</dbReference>
<dbReference type="Pfam" id="PF07690">
    <property type="entry name" value="MFS_1"/>
    <property type="match status" value="1"/>
</dbReference>
<dbReference type="SUPFAM" id="SSF103473">
    <property type="entry name" value="MFS general substrate transporter"/>
    <property type="match status" value="1"/>
</dbReference>
<dbReference type="PROSITE" id="PS50850">
    <property type="entry name" value="MFS"/>
    <property type="match status" value="1"/>
</dbReference>
<reference key="1">
    <citation type="journal article" date="2006" name="Mol. Microbiol.">
        <title>Role of pathogenicity island-associated integrases in the genome plasticity of uropathogenic Escherichia coli strain 536.</title>
        <authorList>
            <person name="Hochhut B."/>
            <person name="Wilde C."/>
            <person name="Balling G."/>
            <person name="Middendorf B."/>
            <person name="Dobrindt U."/>
            <person name="Brzuszkiewicz E."/>
            <person name="Gottschalk G."/>
            <person name="Carniel E."/>
            <person name="Hacker J."/>
        </authorList>
    </citation>
    <scope>NUCLEOTIDE SEQUENCE [LARGE SCALE GENOMIC DNA]</scope>
    <source>
        <strain>536 / UPEC</strain>
    </source>
</reference>
<name>SOTB_ECOL5</name>
<keyword id="KW-0997">Cell inner membrane</keyword>
<keyword id="KW-1003">Cell membrane</keyword>
<keyword id="KW-0472">Membrane</keyword>
<keyword id="KW-0762">Sugar transport</keyword>
<keyword id="KW-0812">Transmembrane</keyword>
<keyword id="KW-1133">Transmembrane helix</keyword>
<keyword id="KW-0813">Transport</keyword>
<accession>Q0THR1</accession>
<organism>
    <name type="scientific">Escherichia coli O6:K15:H31 (strain 536 / UPEC)</name>
    <dbReference type="NCBI Taxonomy" id="362663"/>
    <lineage>
        <taxon>Bacteria</taxon>
        <taxon>Pseudomonadati</taxon>
        <taxon>Pseudomonadota</taxon>
        <taxon>Gammaproteobacteria</taxon>
        <taxon>Enterobacterales</taxon>
        <taxon>Enterobacteriaceae</taxon>
        <taxon>Escherichia</taxon>
    </lineage>
</organism>
<protein>
    <recommendedName>
        <fullName evidence="1">Probable sugar efflux transporter</fullName>
    </recommendedName>
</protein>
<comment type="function">
    <text evidence="1">Involved in the efflux of sugars. The physiological role may be the reduction of the intracellular concentration of toxic sugars or sugar metabolites.</text>
</comment>
<comment type="subcellular location">
    <subcellularLocation>
        <location evidence="1">Cell inner membrane</location>
        <topology evidence="1">Multi-pass membrane protein</topology>
    </subcellularLocation>
</comment>
<comment type="similarity">
    <text evidence="1">Belongs to the major facilitator superfamily. SotB (TC 2.A.1.2) family.</text>
</comment>
<evidence type="ECO:0000255" key="1">
    <source>
        <dbReference type="HAMAP-Rule" id="MF_00517"/>
    </source>
</evidence>
<sequence>MTTNTVSRKVAWLRVVTLAVAAFIFNTTEFVPVGLLSDIAHSFHMQTAQVGIMLTIYAWVVALMSLPFMLMTSQVERRKLLICLFVVFIASHVLSFLSWSFTVLVISRIGVAFAHAIFWSITASLAIRMAPAGKRAQALSLIATGTALAMVLGLPLGRIVGQYFGWRMTFFAIGIGALITLLCLIKLLPLLPSEHSGSLKSLPLLFRRPALMSIYLLTVVVVTAHYTAYSYIEPFVQNIAGFSANFATALLLLLGGAGIIGSVIFGKLGNQYASALVSTAIALLLVCLALLLPAANSEIHLGMLSIFWGIAMMIIGLGMQVKVLALAPDATDVAMALFSGIFNIGIGAGALVGNQVSLHWSMSMIGYVGAVPAFAALIWSIIIFRRWPVTLEEQTQ</sequence>
<proteinExistence type="inferred from homology"/>